<proteinExistence type="evidence at transcript level"/>
<evidence type="ECO:0000250" key="1"/>
<evidence type="ECO:0000250" key="2">
    <source>
        <dbReference type="UniProtKB" id="Q8GTY0"/>
    </source>
</evidence>
<evidence type="ECO:0000305" key="3"/>
<evidence type="ECO:0000312" key="4">
    <source>
        <dbReference type="EMBL" id="BAS82584.1"/>
    </source>
</evidence>
<evidence type="ECO:0000312" key="5">
    <source>
        <dbReference type="EMBL" id="BAS82586.1"/>
    </source>
</evidence>
<evidence type="ECO:0000312" key="6">
    <source>
        <dbReference type="EMBL" id="BAS82588.1"/>
    </source>
</evidence>
<evidence type="ECO:0000312" key="7">
    <source>
        <dbReference type="EMBL" id="BAS82591.1"/>
    </source>
</evidence>
<sequence>MGKEKTHINIVVIGHVDSGKSTTTGHLIYKLGGIDKRVIERFEKEAAEMNKRSFKYAWVLDKLKAERERGITIDIALWKFETTKYYCTVIDAPGHRDFIKNMITGTSQADCAVLIIDSTTGGFEAGISKDGQTREHALLAFTLGVKQMICCCNKMDATTPKYSKARYDEIVKEVSSYLKKVGYNPDKIPFVPISGFEGDNMIERSTNLDWYKGPTLLEALDQINEPKRPSDKPLRLPLQDVYKIGGIGTVPVGRVETGVLKPGMVVTFGPSGLTTEVKSVEMHHEALQEALPGDNVGFNVKNVAVKDLKRGYVASNSKDDPAKEAASFTSQVIIMNHPGQIGNGYAPVLDCHTSHIAVKFAELVTKIDRRSGKELEKEPKFLKNGDAGMVKMIPTKPMVVETFSEYPPLGRFAVRDMRQTVAVGVIKNVEKKDPTGAKVTKAAAKKK</sequence>
<feature type="chain" id="PRO_0000090941" description="Elongation factor 1-alpha">
    <location>
        <begin position="1"/>
        <end position="447"/>
    </location>
</feature>
<feature type="domain" description="tr-type G">
    <location>
        <begin position="5"/>
        <end position="230"/>
    </location>
</feature>
<feature type="region of interest" description="G1" evidence="1">
    <location>
        <begin position="14"/>
        <end position="21"/>
    </location>
</feature>
<feature type="region of interest" description="G2" evidence="1">
    <location>
        <begin position="70"/>
        <end position="74"/>
    </location>
</feature>
<feature type="region of interest" description="G3" evidence="1">
    <location>
        <begin position="91"/>
        <end position="94"/>
    </location>
</feature>
<feature type="region of interest" description="G4" evidence="1">
    <location>
        <begin position="153"/>
        <end position="156"/>
    </location>
</feature>
<feature type="region of interest" description="G5" evidence="1">
    <location>
        <begin position="194"/>
        <end position="196"/>
    </location>
</feature>
<feature type="binding site" evidence="1">
    <location>
        <begin position="14"/>
        <end position="21"/>
    </location>
    <ligand>
        <name>GTP</name>
        <dbReference type="ChEBI" id="CHEBI:37565"/>
    </ligand>
</feature>
<feature type="binding site" evidence="1">
    <location>
        <begin position="91"/>
        <end position="95"/>
    </location>
    <ligand>
        <name>GTP</name>
        <dbReference type="ChEBI" id="CHEBI:37565"/>
    </ligand>
</feature>
<feature type="binding site" evidence="1">
    <location>
        <begin position="153"/>
        <end position="156"/>
    </location>
    <ligand>
        <name>GTP</name>
        <dbReference type="ChEBI" id="CHEBI:37565"/>
    </ligand>
</feature>
<feature type="modified residue" description="N6,N6-dimethyllysine" evidence="2">
    <location>
        <position position="55"/>
    </location>
</feature>
<feature type="modified residue" description="N6,N6,N6-trimethyllysine" evidence="2">
    <location>
        <position position="79"/>
    </location>
</feature>
<feature type="modified residue" description="N6,N6,N6-trimethyllysine" evidence="2">
    <location>
        <position position="187"/>
    </location>
</feature>
<feature type="modified residue" description="N6-methyllysine" evidence="2">
    <location>
        <position position="261"/>
    </location>
</feature>
<feature type="modified residue" description="5-glutamyl glycerylphosphorylethanolamine" evidence="1">
    <location>
        <position position="289"/>
    </location>
</feature>
<feature type="modified residue" description="N6,N6,N6-trimethyllysine" evidence="2">
    <location>
        <position position="306"/>
    </location>
</feature>
<feature type="modified residue" description="5-glutamyl glycerylphosphorylethanolamine" evidence="1">
    <location>
        <position position="362"/>
    </location>
</feature>
<feature type="modified residue" description="N6,N6,N6-trimethyllysine" evidence="2">
    <location>
        <position position="396"/>
    </location>
</feature>
<feature type="sequence conflict" description="In Ref. 1; BAA23658." evidence="3" ref="1">
    <original>K</original>
    <variation>N</variation>
    <location>
        <position position="227"/>
    </location>
</feature>
<feature type="sequence conflict" description="In Ref. 2; AAC15413." evidence="3" ref="2">
    <original>A</original>
    <variation>R</variation>
    <location>
        <position position="444"/>
    </location>
</feature>
<dbReference type="EMBL" id="D63580">
    <property type="protein sequence ID" value="BAA23657.1"/>
    <property type="molecule type" value="mRNA"/>
</dbReference>
<dbReference type="EMBL" id="D63581">
    <property type="protein sequence ID" value="BAA23658.1"/>
    <property type="molecule type" value="mRNA"/>
</dbReference>
<dbReference type="EMBL" id="D63582">
    <property type="protein sequence ID" value="BAA23659.1"/>
    <property type="molecule type" value="mRNA"/>
</dbReference>
<dbReference type="EMBL" id="D63583">
    <property type="protein sequence ID" value="BAA23660.1"/>
    <property type="molecule type" value="mRNA"/>
</dbReference>
<dbReference type="EMBL" id="AF030517">
    <property type="protein sequence ID" value="AAC15413.1"/>
    <property type="molecule type" value="mRNA"/>
</dbReference>
<dbReference type="EMBL" id="GQ848058">
    <property type="protein sequence ID" value="ADM86871.1"/>
    <property type="molecule type" value="mRNA"/>
</dbReference>
<dbReference type="EMBL" id="GQ848074">
    <property type="protein sequence ID" value="ADM86887.1"/>
    <property type="molecule type" value="mRNA"/>
</dbReference>
<dbReference type="EMBL" id="GQ848073">
    <property type="protein sequence ID" value="ADM86886.1"/>
    <property type="molecule type" value="mRNA"/>
</dbReference>
<dbReference type="EMBL" id="GQ848072">
    <property type="protein sequence ID" value="ADM86885.1"/>
    <property type="molecule type" value="mRNA"/>
</dbReference>
<dbReference type="EMBL" id="AC090484">
    <property type="status" value="NOT_ANNOTATED_CDS"/>
    <property type="molecule type" value="Genomic_DNA"/>
</dbReference>
<dbReference type="EMBL" id="DP000009">
    <property type="protein sequence ID" value="ABF94269.1"/>
    <property type="molecule type" value="Genomic_DNA"/>
</dbReference>
<dbReference type="EMBL" id="DP000009">
    <property type="protein sequence ID" value="ABF94270.1"/>
    <property type="molecule type" value="Genomic_DNA"/>
</dbReference>
<dbReference type="EMBL" id="DP000009">
    <property type="protein sequence ID" value="ABF94273.1"/>
    <property type="molecule type" value="Genomic_DNA"/>
</dbReference>
<dbReference type="EMBL" id="DP000009">
    <property type="protein sequence ID" value="ABF94274.1"/>
    <property type="molecule type" value="Genomic_DNA"/>
</dbReference>
<dbReference type="EMBL" id="AP014959">
    <property type="protein sequence ID" value="BAS82584.1"/>
    <property type="molecule type" value="Genomic_DNA"/>
</dbReference>
<dbReference type="EMBL" id="AP014959">
    <property type="protein sequence ID" value="BAS82591.1"/>
    <property type="molecule type" value="Genomic_DNA"/>
</dbReference>
<dbReference type="EMBL" id="AP014959">
    <property type="protein sequence ID" value="BAS82588.1"/>
    <property type="molecule type" value="Genomic_DNA"/>
</dbReference>
<dbReference type="EMBL" id="AP014959">
    <property type="protein sequence ID" value="BAS82586.1"/>
    <property type="molecule type" value="Genomic_DNA"/>
</dbReference>
<dbReference type="EMBL" id="CM000140">
    <property type="protein sequence ID" value="EAZ25791.1"/>
    <property type="molecule type" value="Genomic_DNA"/>
</dbReference>
<dbReference type="EMBL" id="CM000140">
    <property type="protein sequence ID" value="EAZ25792.1"/>
    <property type="molecule type" value="Genomic_DNA"/>
</dbReference>
<dbReference type="EMBL" id="AK061464">
    <property type="protein sequence ID" value="BAG87945.1"/>
    <property type="molecule type" value="mRNA"/>
</dbReference>
<dbReference type="EMBL" id="AK072648">
    <property type="protein sequence ID" value="BAG93078.1"/>
    <property type="molecule type" value="mRNA"/>
</dbReference>
<dbReference type="EMBL" id="AK105030">
    <property type="protein sequence ID" value="BAG97075.1"/>
    <property type="molecule type" value="mRNA"/>
</dbReference>
<dbReference type="RefSeq" id="XP_015629735.1">
    <property type="nucleotide sequence ID" value="XM_015774249.1"/>
</dbReference>
<dbReference type="SMR" id="O64937"/>
<dbReference type="FunCoup" id="O64937">
    <property type="interactions" value="2011"/>
</dbReference>
<dbReference type="STRING" id="39947.O64937"/>
<dbReference type="PaxDb" id="39947-O64937"/>
<dbReference type="EnsemblPlants" id="Os03t0177400-01">
    <property type="protein sequence ID" value="Os03t0177400-01"/>
    <property type="gene ID" value="Os03g0177400"/>
</dbReference>
<dbReference type="EnsemblPlants" id="Os03t0177500-01">
    <property type="protein sequence ID" value="Os03t0177500-01"/>
    <property type="gene ID" value="Os03g0177500"/>
</dbReference>
<dbReference type="EnsemblPlants" id="Os03t0177900-01">
    <property type="protein sequence ID" value="Os03t0177900-01"/>
    <property type="gene ID" value="Os03g0177900"/>
</dbReference>
<dbReference type="EnsemblPlants" id="Os03t0178000-01">
    <property type="protein sequence ID" value="Os03t0178000-01"/>
    <property type="gene ID" value="Os03g0178000"/>
</dbReference>
<dbReference type="EnsemblPlants" id="Os03t0178000-02">
    <property type="protein sequence ID" value="Os03t0178000-02"/>
    <property type="gene ID" value="Os03g0178000"/>
</dbReference>
<dbReference type="Gramene" id="Os03t0177400-01">
    <property type="protein sequence ID" value="Os03t0177400-01"/>
    <property type="gene ID" value="Os03g0177400"/>
</dbReference>
<dbReference type="Gramene" id="Os03t0177500-01">
    <property type="protein sequence ID" value="Os03t0177500-01"/>
    <property type="gene ID" value="Os03g0177500"/>
</dbReference>
<dbReference type="Gramene" id="Os03t0177900-01">
    <property type="protein sequence ID" value="Os03t0177900-01"/>
    <property type="gene ID" value="Os03g0177900"/>
</dbReference>
<dbReference type="Gramene" id="Os03t0178000-01">
    <property type="protein sequence ID" value="Os03t0178000-01"/>
    <property type="gene ID" value="Os03g0178000"/>
</dbReference>
<dbReference type="Gramene" id="Os03t0178000-02">
    <property type="protein sequence ID" value="Os03t0178000-02"/>
    <property type="gene ID" value="Os03g0178000"/>
</dbReference>
<dbReference type="KEGG" id="osa:4331811"/>
<dbReference type="KEGG" id="osa:4331812"/>
<dbReference type="KEGG" id="osa:4331813"/>
<dbReference type="eggNOG" id="KOG0052">
    <property type="taxonomic scope" value="Eukaryota"/>
</dbReference>
<dbReference type="HOGENOM" id="CLU_007265_3_5_1"/>
<dbReference type="InParanoid" id="O64937"/>
<dbReference type="OMA" id="AIRDMGM"/>
<dbReference type="OrthoDB" id="594372at2759"/>
<dbReference type="Proteomes" id="UP000000763">
    <property type="component" value="Chromosome 3"/>
</dbReference>
<dbReference type="Proteomes" id="UP000007752">
    <property type="component" value="Chromosome 3"/>
</dbReference>
<dbReference type="Proteomes" id="UP000059680">
    <property type="component" value="Chromosome 3"/>
</dbReference>
<dbReference type="ExpressionAtlas" id="O64937">
    <property type="expression patterns" value="baseline and differential"/>
</dbReference>
<dbReference type="GO" id="GO:0005737">
    <property type="term" value="C:cytoplasm"/>
    <property type="evidence" value="ECO:0007669"/>
    <property type="project" value="UniProtKB-SubCell"/>
</dbReference>
<dbReference type="GO" id="GO:0005525">
    <property type="term" value="F:GTP binding"/>
    <property type="evidence" value="ECO:0007669"/>
    <property type="project" value="UniProtKB-KW"/>
</dbReference>
<dbReference type="GO" id="GO:0003924">
    <property type="term" value="F:GTPase activity"/>
    <property type="evidence" value="ECO:0000318"/>
    <property type="project" value="GO_Central"/>
</dbReference>
<dbReference type="GO" id="GO:0003746">
    <property type="term" value="F:translation elongation factor activity"/>
    <property type="evidence" value="ECO:0000318"/>
    <property type="project" value="GO_Central"/>
</dbReference>
<dbReference type="GO" id="GO:0006412">
    <property type="term" value="P:translation"/>
    <property type="evidence" value="ECO:0000318"/>
    <property type="project" value="GO_Central"/>
</dbReference>
<dbReference type="GO" id="GO:0006414">
    <property type="term" value="P:translational elongation"/>
    <property type="evidence" value="ECO:0000318"/>
    <property type="project" value="GO_Central"/>
</dbReference>
<dbReference type="CDD" id="cd01883">
    <property type="entry name" value="EF1_alpha"/>
    <property type="match status" value="1"/>
</dbReference>
<dbReference type="CDD" id="cd03693">
    <property type="entry name" value="EF1_alpha_II"/>
    <property type="match status" value="1"/>
</dbReference>
<dbReference type="CDD" id="cd03705">
    <property type="entry name" value="EF1_alpha_III"/>
    <property type="match status" value="1"/>
</dbReference>
<dbReference type="FunFam" id="2.40.30.10:FF:000003">
    <property type="entry name" value="Elongation factor 1-alpha"/>
    <property type="match status" value="1"/>
</dbReference>
<dbReference type="FunFam" id="2.40.30.10:FF:000005">
    <property type="entry name" value="Elongation factor 1-alpha"/>
    <property type="match status" value="1"/>
</dbReference>
<dbReference type="FunFam" id="3.40.50.300:FF:000255">
    <property type="entry name" value="Elongation factor 1-alpha"/>
    <property type="match status" value="1"/>
</dbReference>
<dbReference type="Gene3D" id="3.40.50.300">
    <property type="entry name" value="P-loop containing nucleotide triphosphate hydrolases"/>
    <property type="match status" value="1"/>
</dbReference>
<dbReference type="Gene3D" id="2.40.30.10">
    <property type="entry name" value="Translation factors"/>
    <property type="match status" value="2"/>
</dbReference>
<dbReference type="HAMAP" id="MF_00118_A">
    <property type="entry name" value="EF_Tu_A"/>
    <property type="match status" value="1"/>
</dbReference>
<dbReference type="InterPro" id="IPR004161">
    <property type="entry name" value="EFTu-like_2"/>
</dbReference>
<dbReference type="InterPro" id="IPR031157">
    <property type="entry name" value="G_TR_CS"/>
</dbReference>
<dbReference type="InterPro" id="IPR054696">
    <property type="entry name" value="GTP-eEF1A_C"/>
</dbReference>
<dbReference type="InterPro" id="IPR027417">
    <property type="entry name" value="P-loop_NTPase"/>
</dbReference>
<dbReference type="InterPro" id="IPR000795">
    <property type="entry name" value="T_Tr_GTP-bd_dom"/>
</dbReference>
<dbReference type="InterPro" id="IPR050100">
    <property type="entry name" value="TRAFAC_GTPase_members"/>
</dbReference>
<dbReference type="InterPro" id="IPR009000">
    <property type="entry name" value="Transl_B-barrel_sf"/>
</dbReference>
<dbReference type="InterPro" id="IPR009001">
    <property type="entry name" value="Transl_elong_EF1A/Init_IF2_C"/>
</dbReference>
<dbReference type="InterPro" id="IPR004539">
    <property type="entry name" value="Transl_elong_EF1A_euk/arc"/>
</dbReference>
<dbReference type="NCBIfam" id="TIGR00483">
    <property type="entry name" value="EF-1_alpha"/>
    <property type="match status" value="1"/>
</dbReference>
<dbReference type="NCBIfam" id="NF008969">
    <property type="entry name" value="PRK12317.1"/>
    <property type="match status" value="1"/>
</dbReference>
<dbReference type="PANTHER" id="PTHR23115">
    <property type="entry name" value="TRANSLATION FACTOR"/>
    <property type="match status" value="1"/>
</dbReference>
<dbReference type="Pfam" id="PF22594">
    <property type="entry name" value="GTP-eEF1A_C"/>
    <property type="match status" value="1"/>
</dbReference>
<dbReference type="Pfam" id="PF00009">
    <property type="entry name" value="GTP_EFTU"/>
    <property type="match status" value="1"/>
</dbReference>
<dbReference type="Pfam" id="PF03144">
    <property type="entry name" value="GTP_EFTU_D2"/>
    <property type="match status" value="1"/>
</dbReference>
<dbReference type="PRINTS" id="PR00315">
    <property type="entry name" value="ELONGATNFCT"/>
</dbReference>
<dbReference type="SUPFAM" id="SSF50465">
    <property type="entry name" value="EF-Tu/eEF-1alpha/eIF2-gamma C-terminal domain"/>
    <property type="match status" value="1"/>
</dbReference>
<dbReference type="SUPFAM" id="SSF52540">
    <property type="entry name" value="P-loop containing nucleoside triphosphate hydrolases"/>
    <property type="match status" value="1"/>
</dbReference>
<dbReference type="SUPFAM" id="SSF50447">
    <property type="entry name" value="Translation proteins"/>
    <property type="match status" value="1"/>
</dbReference>
<dbReference type="PROSITE" id="PS00301">
    <property type="entry name" value="G_TR_1"/>
    <property type="match status" value="1"/>
</dbReference>
<dbReference type="PROSITE" id="PS51722">
    <property type="entry name" value="G_TR_2"/>
    <property type="match status" value="1"/>
</dbReference>
<gene>
    <name type="primary">REFA1</name>
    <name evidence="4" type="ordered locus">Os03g0177400</name>
    <name evidence="3" type="ordered locus">LOC_Os03g08010</name>
</gene>
<gene>
    <name type="primary">REFA2</name>
    <name evidence="7" type="ordered locus">Os03g0178000</name>
    <name evidence="3" type="ordered locus">LOC_Os03g08060</name>
</gene>
<gene>
    <name type="primary">REFA3</name>
    <name evidence="6" type="ordered locus">Os03g0177900</name>
    <name evidence="3" type="ordered locus">LOC_Os03g08050</name>
</gene>
<gene>
    <name type="primary">REFA4</name>
    <name evidence="5" type="ordered locus">Os03g0177500</name>
    <name evidence="3" type="ordered locus">LOC_Os03g08020</name>
</gene>
<organism>
    <name type="scientific">Oryza sativa subsp. japonica</name>
    <name type="common">Rice</name>
    <dbReference type="NCBI Taxonomy" id="39947"/>
    <lineage>
        <taxon>Eukaryota</taxon>
        <taxon>Viridiplantae</taxon>
        <taxon>Streptophyta</taxon>
        <taxon>Embryophyta</taxon>
        <taxon>Tracheophyta</taxon>
        <taxon>Spermatophyta</taxon>
        <taxon>Magnoliopsida</taxon>
        <taxon>Liliopsida</taxon>
        <taxon>Poales</taxon>
        <taxon>Poaceae</taxon>
        <taxon>BOP clade</taxon>
        <taxon>Oryzoideae</taxon>
        <taxon>Oryzeae</taxon>
        <taxon>Oryzinae</taxon>
        <taxon>Oryza</taxon>
        <taxon>Oryza sativa</taxon>
    </lineage>
</organism>
<comment type="function">
    <text>This protein promotes the GTP-dependent binding of aminoacyl-tRNA to the A-site of ribosomes during protein biosynthesis.</text>
</comment>
<comment type="subcellular location">
    <subcellularLocation>
        <location>Cytoplasm</location>
    </subcellularLocation>
</comment>
<comment type="similarity">
    <text evidence="3">Belongs to the TRAFAC class translation factor GTPase superfamily. Classic translation factor GTPase family. EF-Tu/EF-1A subfamily.</text>
</comment>
<name>EF1A_ORYSJ</name>
<protein>
    <recommendedName>
        <fullName>Elongation factor 1-alpha</fullName>
        <shortName>EF-1-alpha</shortName>
    </recommendedName>
</protein>
<accession>O64937</accession>
<accession>A3AEP9</accession>
<accession>O49831</accession>
<accession>O50075</accession>
<accession>Q10QZ6</accession>
<keyword id="KW-0963">Cytoplasm</keyword>
<keyword id="KW-0251">Elongation factor</keyword>
<keyword id="KW-0342">GTP-binding</keyword>
<keyword id="KW-0488">Methylation</keyword>
<keyword id="KW-0547">Nucleotide-binding</keyword>
<keyword id="KW-0597">Phosphoprotein</keyword>
<keyword id="KW-0648">Protein biosynthesis</keyword>
<keyword id="KW-1185">Reference proteome</keyword>
<reference key="1">
    <citation type="journal article" date="1998" name="Plant Mol. Biol.">
        <title>Isolation, characterization and mRNA expression of four cDNAs encoding translation elongation factor 1A from rice (Oryza sativa L.).</title>
        <authorList>
            <person name="Kidou S."/>
            <person name="Ejiri S."/>
        </authorList>
    </citation>
    <scope>NUCLEOTIDE SEQUENCE [MRNA] (REFA1; REFA2; REFA3 AND REFA4)</scope>
    <source>
        <strain>cv. Hayayuki</strain>
    </source>
</reference>
<reference key="2">
    <citation type="online journal article" date="1998" name="Plant Gene Register">
        <title>Cloning and sequencing of a rice cDNA encoding translation elongation factor-1 alpha.</title>
        <authorList>
            <person name="Lin T.-Y."/>
            <person name="Wang J.-F."/>
            <person name="Liu K.-H."/>
            <person name="Wang C.-T."/>
        </authorList>
        <locator>PGR98-058</locator>
    </citation>
    <scope>NUCLEOTIDE SEQUENCE [MRNA] (REFA1)</scope>
    <source>
        <strain>cv. Tainung 67</strain>
    </source>
</reference>
<reference key="3">
    <citation type="submission" date="2009-08" db="EMBL/GenBank/DDBJ databases">
        <title>Structural and expression analysis of germinating seed genes in Oryza sativa L.</title>
        <authorList>
            <person name="Yoon U.H."/>
            <person name="Kim Y.H."/>
        </authorList>
    </citation>
    <scope>NUCLEOTIDE SEQUENCE [MRNA]</scope>
    <source>
        <strain>cv. Ilpoombyeo</strain>
        <tissue>Seed</tissue>
    </source>
</reference>
<reference key="4">
    <citation type="journal article" date="2005" name="Genome Res.">
        <title>Sequence, annotation, and analysis of synteny between rice chromosome 3 and diverged grass species.</title>
        <authorList>
            <consortium name="The rice chromosome 3 sequencing consortium"/>
            <person name="Buell C.R."/>
            <person name="Yuan Q."/>
            <person name="Ouyang S."/>
            <person name="Liu J."/>
            <person name="Zhu W."/>
            <person name="Wang A."/>
            <person name="Maiti R."/>
            <person name="Haas B."/>
            <person name="Wortman J."/>
            <person name="Pertea M."/>
            <person name="Jones K.M."/>
            <person name="Kim M."/>
            <person name="Overton L."/>
            <person name="Tsitrin T."/>
            <person name="Fadrosh D."/>
            <person name="Bera J."/>
            <person name="Weaver B."/>
            <person name="Jin S."/>
            <person name="Johri S."/>
            <person name="Reardon M."/>
            <person name="Webb K."/>
            <person name="Hill J."/>
            <person name="Moffat K."/>
            <person name="Tallon L."/>
            <person name="Van Aken S."/>
            <person name="Lewis M."/>
            <person name="Utterback T."/>
            <person name="Feldblyum T."/>
            <person name="Zismann V."/>
            <person name="Iobst S."/>
            <person name="Hsiao J."/>
            <person name="de Vazeille A.R."/>
            <person name="Salzberg S.L."/>
            <person name="White O."/>
            <person name="Fraser C.M."/>
            <person name="Yu Y."/>
            <person name="Kim H."/>
            <person name="Rambo T."/>
            <person name="Currie J."/>
            <person name="Collura K."/>
            <person name="Kernodle-Thompson S."/>
            <person name="Wei F."/>
            <person name="Kudrna K."/>
            <person name="Ammiraju J.S.S."/>
            <person name="Luo M."/>
            <person name="Goicoechea J.L."/>
            <person name="Wing R.A."/>
            <person name="Henry D."/>
            <person name="Oates R."/>
            <person name="Palmer M."/>
            <person name="Pries G."/>
            <person name="Saski C."/>
            <person name="Simmons J."/>
            <person name="Soderlund C."/>
            <person name="Nelson W."/>
            <person name="de la Bastide M."/>
            <person name="Spiegel L."/>
            <person name="Nascimento L."/>
            <person name="Huang E."/>
            <person name="Preston R."/>
            <person name="Zutavern T."/>
            <person name="Palmer L."/>
            <person name="O'Shaughnessy A."/>
            <person name="Dike S."/>
            <person name="McCombie W.R."/>
            <person name="Minx P."/>
            <person name="Cordum H."/>
            <person name="Wilson R."/>
            <person name="Jin W."/>
            <person name="Lee H.R."/>
            <person name="Jiang J."/>
            <person name="Jackson S."/>
        </authorList>
    </citation>
    <scope>NUCLEOTIDE SEQUENCE [LARGE SCALE GENOMIC DNA] (REFA1; REFA2; REFA3 AND REFA4)</scope>
    <source>
        <strain>cv. Nipponbare</strain>
    </source>
</reference>
<reference key="5">
    <citation type="journal article" date="2005" name="Nature">
        <title>The map-based sequence of the rice genome.</title>
        <authorList>
            <consortium name="International rice genome sequencing project (IRGSP)"/>
        </authorList>
    </citation>
    <scope>NUCLEOTIDE SEQUENCE [LARGE SCALE GENOMIC DNA]</scope>
    <source>
        <strain>cv. Nipponbare</strain>
    </source>
</reference>
<reference key="6">
    <citation type="journal article" date="2013" name="Rice">
        <title>Improvement of the Oryza sativa Nipponbare reference genome using next generation sequence and optical map data.</title>
        <authorList>
            <person name="Kawahara Y."/>
            <person name="de la Bastide M."/>
            <person name="Hamilton J.P."/>
            <person name="Kanamori H."/>
            <person name="McCombie W.R."/>
            <person name="Ouyang S."/>
            <person name="Schwartz D.C."/>
            <person name="Tanaka T."/>
            <person name="Wu J."/>
            <person name="Zhou S."/>
            <person name="Childs K.L."/>
            <person name="Davidson R.M."/>
            <person name="Lin H."/>
            <person name="Quesada-Ocampo L."/>
            <person name="Vaillancourt B."/>
            <person name="Sakai H."/>
            <person name="Lee S.S."/>
            <person name="Kim J."/>
            <person name="Numa H."/>
            <person name="Itoh T."/>
            <person name="Buell C.R."/>
            <person name="Matsumoto T."/>
        </authorList>
    </citation>
    <scope>GENOME REANNOTATION</scope>
    <source>
        <strain>cv. Nipponbare</strain>
    </source>
</reference>
<reference key="7">
    <citation type="journal article" date="2005" name="PLoS Biol.">
        <title>The genomes of Oryza sativa: a history of duplications.</title>
        <authorList>
            <person name="Yu J."/>
            <person name="Wang J."/>
            <person name="Lin W."/>
            <person name="Li S."/>
            <person name="Li H."/>
            <person name="Zhou J."/>
            <person name="Ni P."/>
            <person name="Dong W."/>
            <person name="Hu S."/>
            <person name="Zeng C."/>
            <person name="Zhang J."/>
            <person name="Zhang Y."/>
            <person name="Li R."/>
            <person name="Xu Z."/>
            <person name="Li S."/>
            <person name="Li X."/>
            <person name="Zheng H."/>
            <person name="Cong L."/>
            <person name="Lin L."/>
            <person name="Yin J."/>
            <person name="Geng J."/>
            <person name="Li G."/>
            <person name="Shi J."/>
            <person name="Liu J."/>
            <person name="Lv H."/>
            <person name="Li J."/>
            <person name="Wang J."/>
            <person name="Deng Y."/>
            <person name="Ran L."/>
            <person name="Shi X."/>
            <person name="Wang X."/>
            <person name="Wu Q."/>
            <person name="Li C."/>
            <person name="Ren X."/>
            <person name="Wang J."/>
            <person name="Wang X."/>
            <person name="Li D."/>
            <person name="Liu D."/>
            <person name="Zhang X."/>
            <person name="Ji Z."/>
            <person name="Zhao W."/>
            <person name="Sun Y."/>
            <person name="Zhang Z."/>
            <person name="Bao J."/>
            <person name="Han Y."/>
            <person name="Dong L."/>
            <person name="Ji J."/>
            <person name="Chen P."/>
            <person name="Wu S."/>
            <person name="Liu J."/>
            <person name="Xiao Y."/>
            <person name="Bu D."/>
            <person name="Tan J."/>
            <person name="Yang L."/>
            <person name="Ye C."/>
            <person name="Zhang J."/>
            <person name="Xu J."/>
            <person name="Zhou Y."/>
            <person name="Yu Y."/>
            <person name="Zhang B."/>
            <person name="Zhuang S."/>
            <person name="Wei H."/>
            <person name="Liu B."/>
            <person name="Lei M."/>
            <person name="Yu H."/>
            <person name="Li Y."/>
            <person name="Xu H."/>
            <person name="Wei S."/>
            <person name="He X."/>
            <person name="Fang L."/>
            <person name="Zhang Z."/>
            <person name="Zhang Y."/>
            <person name="Huang X."/>
            <person name="Su Z."/>
            <person name="Tong W."/>
            <person name="Li J."/>
            <person name="Tong Z."/>
            <person name="Li S."/>
            <person name="Ye J."/>
            <person name="Wang L."/>
            <person name="Fang L."/>
            <person name="Lei T."/>
            <person name="Chen C.-S."/>
            <person name="Chen H.-C."/>
            <person name="Xu Z."/>
            <person name="Li H."/>
            <person name="Huang H."/>
            <person name="Zhang F."/>
            <person name="Xu H."/>
            <person name="Li N."/>
            <person name="Zhao C."/>
            <person name="Li S."/>
            <person name="Dong L."/>
            <person name="Huang Y."/>
            <person name="Li L."/>
            <person name="Xi Y."/>
            <person name="Qi Q."/>
            <person name="Li W."/>
            <person name="Zhang B."/>
            <person name="Hu W."/>
            <person name="Zhang Y."/>
            <person name="Tian X."/>
            <person name="Jiao Y."/>
            <person name="Liang X."/>
            <person name="Jin J."/>
            <person name="Gao L."/>
            <person name="Zheng W."/>
            <person name="Hao B."/>
            <person name="Liu S.-M."/>
            <person name="Wang W."/>
            <person name="Yuan L."/>
            <person name="Cao M."/>
            <person name="McDermott J."/>
            <person name="Samudrala R."/>
            <person name="Wang J."/>
            <person name="Wong G.K.-S."/>
            <person name="Yang H."/>
        </authorList>
    </citation>
    <scope>NUCLEOTIDE SEQUENCE [LARGE SCALE GENOMIC DNA]</scope>
    <source>
        <strain>cv. Nipponbare</strain>
    </source>
</reference>
<reference key="8">
    <citation type="journal article" date="2003" name="Science">
        <title>Collection, mapping, and annotation of over 28,000 cDNA clones from japonica rice.</title>
        <authorList>
            <consortium name="The rice full-length cDNA consortium"/>
        </authorList>
    </citation>
    <scope>NUCLEOTIDE SEQUENCE [LARGE SCALE MRNA]</scope>
    <source>
        <strain>cv. Nipponbare</strain>
    </source>
</reference>